<comment type="function">
    <text>Involved in oxygen transport from the lung to the various peripheral tissues.</text>
</comment>
<comment type="function">
    <molecule>Hemopressin</molecule>
    <text evidence="2">Hemopressin acts as an antagonist peptide of the cannabinoid receptor CNR1. Hemopressin-binding efficiently blocks cannabinoid receptor CNR1 and subsequent signaling.</text>
</comment>
<comment type="subunit">
    <text>Heterotetramer of two alpha chains and two beta chains.</text>
</comment>
<comment type="tissue specificity">
    <text>Red blood cells.</text>
</comment>
<comment type="similarity">
    <text evidence="4">Belongs to the globin family.</text>
</comment>
<accession>P01938</accession>
<name>HBA_LORTA</name>
<proteinExistence type="evidence at protein level"/>
<feature type="chain" id="PRO_0000052669" description="Hemoglobin subunit alpha">
    <location>
        <begin position="1"/>
        <end position="141"/>
    </location>
</feature>
<feature type="peptide" id="PRO_0000455890" description="Hemopressin" evidence="2">
    <location>
        <begin position="95"/>
        <end position="103"/>
    </location>
</feature>
<feature type="domain" description="Globin" evidence="4">
    <location>
        <begin position="1"/>
        <end position="141"/>
    </location>
</feature>
<feature type="binding site" evidence="4">
    <location>
        <position position="58"/>
    </location>
    <ligand>
        <name>O2</name>
        <dbReference type="ChEBI" id="CHEBI:15379"/>
    </ligand>
</feature>
<feature type="binding site" description="proximal binding residue" evidence="4">
    <location>
        <position position="87"/>
    </location>
    <ligand>
        <name>heme b</name>
        <dbReference type="ChEBI" id="CHEBI:60344"/>
    </ligand>
    <ligandPart>
        <name>Fe</name>
        <dbReference type="ChEBI" id="CHEBI:18248"/>
    </ligandPart>
</feature>
<feature type="modified residue" description="Phosphoserine" evidence="3">
    <location>
        <position position="3"/>
    </location>
</feature>
<feature type="modified residue" description="N6-succinyllysine" evidence="1">
    <location>
        <position position="7"/>
    </location>
</feature>
<feature type="modified residue" description="Phosphothreonine" evidence="3">
    <location>
        <position position="8"/>
    </location>
</feature>
<feature type="modified residue" description="N6-succinyllysine" evidence="1">
    <location>
        <position position="11"/>
    </location>
</feature>
<feature type="modified residue" description="N6-acetyllysine; alternate" evidence="3">
    <location>
        <position position="16"/>
    </location>
</feature>
<feature type="modified residue" description="N6-succinyllysine; alternate" evidence="1">
    <location>
        <position position="16"/>
    </location>
</feature>
<feature type="modified residue" description="Phosphotyrosine" evidence="3">
    <location>
        <position position="24"/>
    </location>
</feature>
<feature type="modified residue" description="Phosphoserine" evidence="3">
    <location>
        <position position="35"/>
    </location>
</feature>
<feature type="modified residue" description="N6-succinyllysine" evidence="1">
    <location>
        <position position="40"/>
    </location>
</feature>
<feature type="modified residue" description="Phosphoserine" evidence="3">
    <location>
        <position position="49"/>
    </location>
</feature>
<feature type="modified residue" description="Phosphoserine" evidence="1">
    <location>
        <position position="102"/>
    </location>
</feature>
<feature type="modified residue" description="Phosphothreonine" evidence="1">
    <location>
        <position position="108"/>
    </location>
</feature>
<feature type="modified residue" description="Phosphoserine" evidence="1">
    <location>
        <position position="124"/>
    </location>
</feature>
<feature type="modified residue" description="Phosphoserine" evidence="1">
    <location>
        <position position="131"/>
    </location>
</feature>
<feature type="modified residue" description="Phosphothreonine" evidence="1">
    <location>
        <position position="134"/>
    </location>
</feature>
<feature type="modified residue" description="Phosphothreonine" evidence="1">
    <location>
        <position position="137"/>
    </location>
</feature>
<feature type="modified residue" description="Phosphoserine" evidence="1">
    <location>
        <position position="138"/>
    </location>
</feature>
<evidence type="ECO:0000250" key="1">
    <source>
        <dbReference type="UniProtKB" id="P01942"/>
    </source>
</evidence>
<evidence type="ECO:0000250" key="2">
    <source>
        <dbReference type="UniProtKB" id="P01946"/>
    </source>
</evidence>
<evidence type="ECO:0000250" key="3">
    <source>
        <dbReference type="UniProtKB" id="P69905"/>
    </source>
</evidence>
<evidence type="ECO:0000255" key="4">
    <source>
        <dbReference type="PROSITE-ProRule" id="PRU00238"/>
    </source>
</evidence>
<dbReference type="PIR" id="A91949">
    <property type="entry name" value="HALRN"/>
</dbReference>
<dbReference type="SMR" id="P01938"/>
<dbReference type="GO" id="GO:0072562">
    <property type="term" value="C:blood microparticle"/>
    <property type="evidence" value="ECO:0007669"/>
    <property type="project" value="TreeGrafter"/>
</dbReference>
<dbReference type="GO" id="GO:0031838">
    <property type="term" value="C:haptoglobin-hemoglobin complex"/>
    <property type="evidence" value="ECO:0007669"/>
    <property type="project" value="TreeGrafter"/>
</dbReference>
<dbReference type="GO" id="GO:0005833">
    <property type="term" value="C:hemoglobin complex"/>
    <property type="evidence" value="ECO:0007669"/>
    <property type="project" value="InterPro"/>
</dbReference>
<dbReference type="GO" id="GO:0031720">
    <property type="term" value="F:haptoglobin binding"/>
    <property type="evidence" value="ECO:0007669"/>
    <property type="project" value="TreeGrafter"/>
</dbReference>
<dbReference type="GO" id="GO:0020037">
    <property type="term" value="F:heme binding"/>
    <property type="evidence" value="ECO:0007669"/>
    <property type="project" value="InterPro"/>
</dbReference>
<dbReference type="GO" id="GO:0005506">
    <property type="term" value="F:iron ion binding"/>
    <property type="evidence" value="ECO:0007669"/>
    <property type="project" value="InterPro"/>
</dbReference>
<dbReference type="GO" id="GO:0043177">
    <property type="term" value="F:organic acid binding"/>
    <property type="evidence" value="ECO:0007669"/>
    <property type="project" value="TreeGrafter"/>
</dbReference>
<dbReference type="GO" id="GO:0019825">
    <property type="term" value="F:oxygen binding"/>
    <property type="evidence" value="ECO:0007669"/>
    <property type="project" value="InterPro"/>
</dbReference>
<dbReference type="GO" id="GO:0005344">
    <property type="term" value="F:oxygen carrier activity"/>
    <property type="evidence" value="ECO:0007669"/>
    <property type="project" value="UniProtKB-KW"/>
</dbReference>
<dbReference type="GO" id="GO:0004601">
    <property type="term" value="F:peroxidase activity"/>
    <property type="evidence" value="ECO:0007669"/>
    <property type="project" value="TreeGrafter"/>
</dbReference>
<dbReference type="GO" id="GO:0042744">
    <property type="term" value="P:hydrogen peroxide catabolic process"/>
    <property type="evidence" value="ECO:0007669"/>
    <property type="project" value="TreeGrafter"/>
</dbReference>
<dbReference type="CDD" id="cd08927">
    <property type="entry name" value="Hb-alpha-like"/>
    <property type="match status" value="1"/>
</dbReference>
<dbReference type="FunFam" id="1.10.490.10:FF:000002">
    <property type="entry name" value="Hemoglobin subunit alpha"/>
    <property type="match status" value="1"/>
</dbReference>
<dbReference type="Gene3D" id="1.10.490.10">
    <property type="entry name" value="Globins"/>
    <property type="match status" value="1"/>
</dbReference>
<dbReference type="InterPro" id="IPR000971">
    <property type="entry name" value="Globin"/>
</dbReference>
<dbReference type="InterPro" id="IPR009050">
    <property type="entry name" value="Globin-like_sf"/>
</dbReference>
<dbReference type="InterPro" id="IPR012292">
    <property type="entry name" value="Globin/Proto"/>
</dbReference>
<dbReference type="InterPro" id="IPR002338">
    <property type="entry name" value="Hemoglobin_a-typ"/>
</dbReference>
<dbReference type="InterPro" id="IPR050056">
    <property type="entry name" value="Hemoglobin_oxygen_transport"/>
</dbReference>
<dbReference type="InterPro" id="IPR002339">
    <property type="entry name" value="Hemoglobin_pi"/>
</dbReference>
<dbReference type="PANTHER" id="PTHR11442">
    <property type="entry name" value="HEMOGLOBIN FAMILY MEMBER"/>
    <property type="match status" value="1"/>
</dbReference>
<dbReference type="PANTHER" id="PTHR11442:SF48">
    <property type="entry name" value="HEMOGLOBIN SUBUNIT ALPHA"/>
    <property type="match status" value="1"/>
</dbReference>
<dbReference type="Pfam" id="PF00042">
    <property type="entry name" value="Globin"/>
    <property type="match status" value="1"/>
</dbReference>
<dbReference type="PRINTS" id="PR00612">
    <property type="entry name" value="ALPHAHAEM"/>
</dbReference>
<dbReference type="PRINTS" id="PR00815">
    <property type="entry name" value="PIHAEM"/>
</dbReference>
<dbReference type="SUPFAM" id="SSF46458">
    <property type="entry name" value="Globin-like"/>
    <property type="match status" value="1"/>
</dbReference>
<dbReference type="PROSITE" id="PS01033">
    <property type="entry name" value="GLOBIN"/>
    <property type="match status" value="1"/>
</dbReference>
<organism>
    <name type="scientific">Loris tardigradus</name>
    <name type="common">Slender loris</name>
    <dbReference type="NCBI Taxonomy" id="9468"/>
    <lineage>
        <taxon>Eukaryota</taxon>
        <taxon>Metazoa</taxon>
        <taxon>Chordata</taxon>
        <taxon>Craniata</taxon>
        <taxon>Vertebrata</taxon>
        <taxon>Euteleostomi</taxon>
        <taxon>Mammalia</taxon>
        <taxon>Eutheria</taxon>
        <taxon>Euarchontoglires</taxon>
        <taxon>Primates</taxon>
        <taxon>Strepsirrhini</taxon>
        <taxon>Lorisiformes</taxon>
        <taxon>Lorisidae</taxon>
        <taxon>Loris</taxon>
    </lineage>
</organism>
<gene>
    <name type="primary">HBA</name>
</gene>
<keyword id="KW-0007">Acetylation</keyword>
<keyword id="KW-0903">Direct protein sequencing</keyword>
<keyword id="KW-0349">Heme</keyword>
<keyword id="KW-0408">Iron</keyword>
<keyword id="KW-0479">Metal-binding</keyword>
<keyword id="KW-0561">Oxygen transport</keyword>
<keyword id="KW-0597">Phosphoprotein</keyword>
<keyword id="KW-0813">Transport</keyword>
<protein>
    <recommendedName>
        <fullName>Hemoglobin subunit alpha</fullName>
    </recommendedName>
    <alternativeName>
        <fullName>Alpha-globin</fullName>
    </alternativeName>
    <alternativeName>
        <fullName>Hemoglobin alpha chain</fullName>
    </alternativeName>
    <component>
        <recommendedName>
            <fullName evidence="2">Hemopressin</fullName>
        </recommendedName>
    </component>
</protein>
<reference key="1">
    <citation type="journal article" date="1978" name="J. Biochem.">
        <title>Amino acid sequences of the alpha and beta chains of adult hemoglobin of the slender loris, Loris tardigradus.</title>
        <authorList>
            <person name="Maita T."/>
            <person name="Goodman M."/>
            <person name="Matsuda G."/>
        </authorList>
    </citation>
    <scope>PROTEIN SEQUENCE</scope>
</reference>
<sequence length="141" mass="15246">VLSPADKTNVKTAWEKVGGHAGEYGAEALERMFLSFPTTKTYFPHFDLSHGSAQVKAHGKKVADALTTAVSHVDDMPSALSALSDLHAHKLRVDPVNFKLLSHCLLVTLACHHPADFTPAVHASLDKFLASVSTVLTSKYR</sequence>